<organism>
    <name type="scientific">Pasteurella multocida (strain Pm70)</name>
    <dbReference type="NCBI Taxonomy" id="272843"/>
    <lineage>
        <taxon>Bacteria</taxon>
        <taxon>Pseudomonadati</taxon>
        <taxon>Pseudomonadota</taxon>
        <taxon>Gammaproteobacteria</taxon>
        <taxon>Pasteurellales</taxon>
        <taxon>Pasteurellaceae</taxon>
        <taxon>Pasteurella</taxon>
    </lineage>
</organism>
<feature type="chain" id="PRO_0000171273" description="o-succinylbenzoate synthase">
    <location>
        <begin position="1"/>
        <end position="337"/>
    </location>
</feature>
<feature type="active site" description="Proton donor" evidence="1">
    <location>
        <position position="142"/>
    </location>
</feature>
<feature type="active site" description="Proton acceptor" evidence="1">
    <location>
        <position position="248"/>
    </location>
</feature>
<feature type="binding site" evidence="1">
    <location>
        <position position="170"/>
    </location>
    <ligand>
        <name>Mg(2+)</name>
        <dbReference type="ChEBI" id="CHEBI:18420"/>
    </ligand>
</feature>
<feature type="binding site" evidence="1">
    <location>
        <position position="199"/>
    </location>
    <ligand>
        <name>Mg(2+)</name>
        <dbReference type="ChEBI" id="CHEBI:18420"/>
    </ligand>
</feature>
<feature type="binding site" evidence="1">
    <location>
        <position position="222"/>
    </location>
    <ligand>
        <name>Mg(2+)</name>
        <dbReference type="ChEBI" id="CHEBI:18420"/>
    </ligand>
</feature>
<keyword id="KW-0456">Lyase</keyword>
<keyword id="KW-0460">Magnesium</keyword>
<keyword id="KW-0474">Menaquinone biosynthesis</keyword>
<keyword id="KW-0479">Metal-binding</keyword>
<keyword id="KW-1185">Reference proteome</keyword>
<reference key="1">
    <citation type="journal article" date="2001" name="Proc. Natl. Acad. Sci. U.S.A.">
        <title>Complete genomic sequence of Pasteurella multocida Pm70.</title>
        <authorList>
            <person name="May B.J."/>
            <person name="Zhang Q."/>
            <person name="Li L.L."/>
            <person name="Paustian M.L."/>
            <person name="Whittam T.S."/>
            <person name="Kapur V."/>
        </authorList>
    </citation>
    <scope>NUCLEOTIDE SEQUENCE [LARGE SCALE GENOMIC DNA]</scope>
    <source>
        <strain>Pm70</strain>
    </source>
</reference>
<dbReference type="EC" id="4.2.1.113" evidence="1"/>
<dbReference type="EMBL" id="AE004439">
    <property type="protein sequence ID" value="AAK03178.1"/>
    <property type="molecule type" value="Genomic_DNA"/>
</dbReference>
<dbReference type="RefSeq" id="WP_010907015.1">
    <property type="nucleotide sequence ID" value="NC_002663.1"/>
</dbReference>
<dbReference type="SMR" id="Q9CLV7"/>
<dbReference type="STRING" id="272843.PM1094"/>
<dbReference type="EnsemblBacteria" id="AAK03178">
    <property type="protein sequence ID" value="AAK03178"/>
    <property type="gene ID" value="PM1094"/>
</dbReference>
<dbReference type="GeneID" id="77206412"/>
<dbReference type="KEGG" id="pmu:PM1094"/>
<dbReference type="PATRIC" id="fig|272843.6.peg.1108"/>
<dbReference type="HOGENOM" id="CLU_030273_0_1_6"/>
<dbReference type="OrthoDB" id="3725747at2"/>
<dbReference type="UniPathway" id="UPA00079"/>
<dbReference type="UniPathway" id="UPA01057">
    <property type="reaction ID" value="UER00165"/>
</dbReference>
<dbReference type="Proteomes" id="UP000000809">
    <property type="component" value="Chromosome"/>
</dbReference>
<dbReference type="GO" id="GO:0000287">
    <property type="term" value="F:magnesium ion binding"/>
    <property type="evidence" value="ECO:0007669"/>
    <property type="project" value="UniProtKB-UniRule"/>
</dbReference>
<dbReference type="GO" id="GO:0043748">
    <property type="term" value="F:O-succinylbenzoate synthase activity"/>
    <property type="evidence" value="ECO:0007669"/>
    <property type="project" value="UniProtKB-EC"/>
</dbReference>
<dbReference type="GO" id="GO:0009234">
    <property type="term" value="P:menaquinone biosynthetic process"/>
    <property type="evidence" value="ECO:0007669"/>
    <property type="project" value="UniProtKB-UniRule"/>
</dbReference>
<dbReference type="CDD" id="cd03320">
    <property type="entry name" value="OSBS"/>
    <property type="match status" value="1"/>
</dbReference>
<dbReference type="Gene3D" id="3.20.20.120">
    <property type="entry name" value="Enolase-like C-terminal domain"/>
    <property type="match status" value="1"/>
</dbReference>
<dbReference type="Gene3D" id="3.30.390.10">
    <property type="entry name" value="Enolase-like, N-terminal domain"/>
    <property type="match status" value="1"/>
</dbReference>
<dbReference type="HAMAP" id="MF_00470">
    <property type="entry name" value="MenC_1"/>
    <property type="match status" value="1"/>
</dbReference>
<dbReference type="InterPro" id="IPR036849">
    <property type="entry name" value="Enolase-like_C_sf"/>
</dbReference>
<dbReference type="InterPro" id="IPR029017">
    <property type="entry name" value="Enolase-like_N"/>
</dbReference>
<dbReference type="InterPro" id="IPR029065">
    <property type="entry name" value="Enolase_C-like"/>
</dbReference>
<dbReference type="InterPro" id="IPR013342">
    <property type="entry name" value="Mandelate_racemase_C"/>
</dbReference>
<dbReference type="InterPro" id="IPR010196">
    <property type="entry name" value="OSB_synthase_MenC1"/>
</dbReference>
<dbReference type="InterPro" id="IPR041338">
    <property type="entry name" value="OSBS_N"/>
</dbReference>
<dbReference type="NCBIfam" id="TIGR01927">
    <property type="entry name" value="menC_gam_Gplu"/>
    <property type="match status" value="1"/>
</dbReference>
<dbReference type="NCBIfam" id="NF003473">
    <property type="entry name" value="PRK05105.1"/>
    <property type="match status" value="1"/>
</dbReference>
<dbReference type="PANTHER" id="PTHR48073:SF2">
    <property type="entry name" value="O-SUCCINYLBENZOATE SYNTHASE"/>
    <property type="match status" value="1"/>
</dbReference>
<dbReference type="PANTHER" id="PTHR48073">
    <property type="entry name" value="O-SUCCINYLBENZOATE SYNTHASE-RELATED"/>
    <property type="match status" value="1"/>
</dbReference>
<dbReference type="Pfam" id="PF21508">
    <property type="entry name" value="MenC_N"/>
    <property type="match status" value="1"/>
</dbReference>
<dbReference type="Pfam" id="PF13378">
    <property type="entry name" value="MR_MLE_C"/>
    <property type="match status" value="1"/>
</dbReference>
<dbReference type="SFLD" id="SFLDG00180">
    <property type="entry name" value="muconate_cycloisomerase"/>
    <property type="match status" value="1"/>
</dbReference>
<dbReference type="SFLD" id="SFLDF00009">
    <property type="entry name" value="o-succinylbenzoate_synthase"/>
    <property type="match status" value="1"/>
</dbReference>
<dbReference type="SMART" id="SM00922">
    <property type="entry name" value="MR_MLE"/>
    <property type="match status" value="1"/>
</dbReference>
<dbReference type="SUPFAM" id="SSF51604">
    <property type="entry name" value="Enolase C-terminal domain-like"/>
    <property type="match status" value="1"/>
</dbReference>
<dbReference type="SUPFAM" id="SSF54826">
    <property type="entry name" value="Enolase N-terminal domain-like"/>
    <property type="match status" value="1"/>
</dbReference>
<gene>
    <name evidence="1" type="primary">menC</name>
    <name type="ordered locus">PM1094</name>
</gene>
<sequence length="337" mass="37891">MTMIRKFKLYQYSIPVDSQLILRNRFLKKREGLLVQVCCDDAQGWGEIAPLPEFSQETLEQAREQALAWLEEWSASDGSAGKLPLEHLFPSVAFGLSCALAEMKGLLHEEGNYQVAPLCYGDPDELYDPLNQMQGEKVAKIKVGMYEANRDGLIADMLLEAIPDLHLRLDANRSWTPSKAQMFAKYVKPEHRARIQFLEEPCKTPAESLQFAEETGIAIAWDETVRDAEFQQNPPHFFTPQVKAIVIKPTLVGSIQRCVELIKQAHAHGIQAVISSSIESSLGLTQLARLAQQYTPNTVPGLDTLDLMDYQVIRPWPSSTLPLIDLDSEYIVPIKLD</sequence>
<evidence type="ECO:0000255" key="1">
    <source>
        <dbReference type="HAMAP-Rule" id="MF_00470"/>
    </source>
</evidence>
<comment type="function">
    <text evidence="1">Converts 2-succinyl-6-hydroxy-2,4-cyclohexadiene-1-carboxylate (SHCHC) to 2-succinylbenzoate (OSB).</text>
</comment>
<comment type="catalytic activity">
    <reaction evidence="1">
        <text>(1R,6R)-6-hydroxy-2-succinyl-cyclohexa-2,4-diene-1-carboxylate = 2-succinylbenzoate + H2O</text>
        <dbReference type="Rhea" id="RHEA:10196"/>
        <dbReference type="ChEBI" id="CHEBI:15377"/>
        <dbReference type="ChEBI" id="CHEBI:18325"/>
        <dbReference type="ChEBI" id="CHEBI:58689"/>
        <dbReference type="EC" id="4.2.1.113"/>
    </reaction>
</comment>
<comment type="cofactor">
    <cofactor evidence="1">
        <name>a divalent metal cation</name>
        <dbReference type="ChEBI" id="CHEBI:60240"/>
    </cofactor>
</comment>
<comment type="pathway">
    <text evidence="1">Quinol/quinone metabolism; 1,4-dihydroxy-2-naphthoate biosynthesis; 1,4-dihydroxy-2-naphthoate from chorismate: step 4/7.</text>
</comment>
<comment type="pathway">
    <text evidence="1">Quinol/quinone metabolism; menaquinone biosynthesis.</text>
</comment>
<comment type="similarity">
    <text evidence="1">Belongs to the mandelate racemase/muconate lactonizing enzyme family. MenC type 1 subfamily.</text>
</comment>
<name>MENC_PASMU</name>
<proteinExistence type="inferred from homology"/>
<accession>Q9CLV7</accession>
<protein>
    <recommendedName>
        <fullName evidence="1">o-succinylbenzoate synthase</fullName>
        <shortName evidence="1">OSB synthase</shortName>
        <shortName evidence="1">OSBS</shortName>
        <ecNumber evidence="1">4.2.1.113</ecNumber>
    </recommendedName>
    <alternativeName>
        <fullName evidence="1">4-(2'-carboxyphenyl)-4-oxybutyric acid synthase</fullName>
    </alternativeName>
    <alternativeName>
        <fullName evidence="1">o-succinylbenzoic acid synthase</fullName>
    </alternativeName>
</protein>